<dbReference type="PIR" id="A28640">
    <property type="entry name" value="LNPGC1"/>
</dbReference>
<dbReference type="PDB" id="1SPF">
    <property type="method" value="NMR"/>
    <property type="chains" value="A=1-35"/>
</dbReference>
<dbReference type="PDB" id="5NDA">
    <property type="method" value="NMR"/>
    <property type="chains" value="A=3-35"/>
</dbReference>
<dbReference type="PDBsum" id="1SPF"/>
<dbReference type="PDBsum" id="5NDA"/>
<dbReference type="BMRB" id="P15785"/>
<dbReference type="SMR" id="P15785"/>
<dbReference type="STRING" id="9823.ENSSSCP00000010269"/>
<dbReference type="SwissPalm" id="P15785"/>
<dbReference type="PaxDb" id="9823-ENSSSCP00000010269"/>
<dbReference type="eggNOG" id="ENOG502S6QH">
    <property type="taxonomic scope" value="Eukaryota"/>
</dbReference>
<dbReference type="HOGENOM" id="CLU_087015_0_0_1"/>
<dbReference type="InParanoid" id="P15785"/>
<dbReference type="EvolutionaryTrace" id="P15785"/>
<dbReference type="Proteomes" id="UP000008227">
    <property type="component" value="Unplaced"/>
</dbReference>
<dbReference type="Proteomes" id="UP000314985">
    <property type="component" value="Unplaced"/>
</dbReference>
<dbReference type="Proteomes" id="UP000694570">
    <property type="component" value="Unplaced"/>
</dbReference>
<dbReference type="Proteomes" id="UP000694571">
    <property type="component" value="Unplaced"/>
</dbReference>
<dbReference type="Proteomes" id="UP000694720">
    <property type="component" value="Unplaced"/>
</dbReference>
<dbReference type="Proteomes" id="UP000694722">
    <property type="component" value="Unplaced"/>
</dbReference>
<dbReference type="Proteomes" id="UP000694723">
    <property type="component" value="Unplaced"/>
</dbReference>
<dbReference type="Proteomes" id="UP000694724">
    <property type="component" value="Unplaced"/>
</dbReference>
<dbReference type="Proteomes" id="UP000694725">
    <property type="component" value="Unplaced"/>
</dbReference>
<dbReference type="Proteomes" id="UP000694726">
    <property type="component" value="Unplaced"/>
</dbReference>
<dbReference type="Proteomes" id="UP000694727">
    <property type="component" value="Unplaced"/>
</dbReference>
<dbReference type="Proteomes" id="UP000694728">
    <property type="component" value="Unplaced"/>
</dbReference>
<dbReference type="GO" id="GO:0005576">
    <property type="term" value="C:extracellular region"/>
    <property type="evidence" value="ECO:0007669"/>
    <property type="project" value="UniProtKB-SubCell"/>
</dbReference>
<dbReference type="GO" id="GO:0007585">
    <property type="term" value="P:respiratory gaseous exchange by respiratory system"/>
    <property type="evidence" value="ECO:0007669"/>
    <property type="project" value="UniProtKB-KW"/>
</dbReference>
<dbReference type="InterPro" id="IPR018051">
    <property type="entry name" value="SP-C_palmitoylation_site"/>
</dbReference>
<dbReference type="InterPro" id="IPR015091">
    <property type="entry name" value="Surfactant_protein_propep"/>
</dbReference>
<dbReference type="Pfam" id="PF08999">
    <property type="entry name" value="SP_C-Propep"/>
    <property type="match status" value="1"/>
</dbReference>
<dbReference type="PROSITE" id="PS00341">
    <property type="entry name" value="SURFACT_PALMITOYL"/>
    <property type="match status" value="1"/>
</dbReference>
<keyword id="KW-0002">3D-structure</keyword>
<keyword id="KW-0903">Direct protein sequencing</keyword>
<keyword id="KW-0305">Gaseous exchange</keyword>
<keyword id="KW-0449">Lipoprotein</keyword>
<keyword id="KW-0564">Palmitate</keyword>
<keyword id="KW-1185">Reference proteome</keyword>
<keyword id="KW-0964">Secreted</keyword>
<keyword id="KW-0767">Surface film</keyword>
<comment type="function">
    <text>Pulmonary surfactant associated proteins promote alveolar stability by lowering the surface tension at the air-liquid interface in the peripheral air spaces.</text>
</comment>
<comment type="subcellular location">
    <subcellularLocation>
        <location>Secreted</location>
        <location>Extracellular space</location>
        <location>Surface film</location>
    </subcellularLocation>
</comment>
<comment type="miscellaneous">
    <text>Pulmonary surfactant consists of 90% lipid and 10% protein. There are 4 surfactant-associated proteins: 2 collagenous, carbohydrate-binding glycoproteins (SP-A and SP-D) and 2 small hydrophobic proteins (SP-B and SP-C).</text>
</comment>
<organism>
    <name type="scientific">Sus scrofa</name>
    <name type="common">Pig</name>
    <dbReference type="NCBI Taxonomy" id="9823"/>
    <lineage>
        <taxon>Eukaryota</taxon>
        <taxon>Metazoa</taxon>
        <taxon>Chordata</taxon>
        <taxon>Craniata</taxon>
        <taxon>Vertebrata</taxon>
        <taxon>Euteleostomi</taxon>
        <taxon>Mammalia</taxon>
        <taxon>Eutheria</taxon>
        <taxon>Laurasiatheria</taxon>
        <taxon>Artiodactyla</taxon>
        <taxon>Suina</taxon>
        <taxon>Suidae</taxon>
        <taxon>Sus</taxon>
    </lineage>
</organism>
<feature type="chain" id="PRO_0000183015" description="Surfactant protein C">
    <location>
        <begin position="1"/>
        <end position="35"/>
    </location>
</feature>
<feature type="lipid moiety-binding region" description="S-palmitoyl cysteine" evidence="2">
    <location>
        <position position="5"/>
    </location>
</feature>
<feature type="lipid moiety-binding region" description="S-palmitoyl cysteine" evidence="2">
    <location>
        <position position="6"/>
    </location>
</feature>
<feature type="strand" evidence="3">
    <location>
        <begin position="4"/>
        <end position="6"/>
    </location>
</feature>
<feature type="helix" evidence="3">
    <location>
        <begin position="9"/>
        <end position="33"/>
    </location>
</feature>
<protein>
    <recommendedName>
        <fullName evidence="1">Surfactant protein C</fullName>
        <shortName>SP-C</shortName>
    </recommendedName>
    <alternativeName>
        <fullName>Pulmonary surfactant-associated protein C</fullName>
    </alternativeName>
    <alternativeName>
        <fullName>Pulmonary surfactant-associated proteolipid SPL(Val)</fullName>
    </alternativeName>
</protein>
<gene>
    <name type="primary">SFTPC</name>
    <name type="synonym">SFTP2</name>
</gene>
<evidence type="ECO:0000250" key="1">
    <source>
        <dbReference type="UniProtKB" id="P11686"/>
    </source>
</evidence>
<evidence type="ECO:0000269" key="2">
    <source>
    </source>
</evidence>
<evidence type="ECO:0007829" key="3">
    <source>
        <dbReference type="PDB" id="1SPF"/>
    </source>
</evidence>
<name>PSPC_PIG</name>
<accession>P15785</accession>
<proteinExistence type="evidence at protein level"/>
<sequence length="35" mass="3710">LRIPCCPVNLKRLLVVVVVVVLVVVVIVGALLMGL</sequence>
<reference key="1">
    <citation type="journal article" date="1988" name="Biochemistry">
        <title>Size and structure of the hydrophobic low molecular weight surfactant-associated polypeptide.</title>
        <authorList>
            <person name="Johansson J."/>
            <person name="Curstedt T."/>
            <person name="Robertson B."/>
            <person name="Joernvall H."/>
        </authorList>
    </citation>
    <scope>PROTEIN SEQUENCE</scope>
</reference>
<reference key="2">
    <citation type="journal article" date="1990" name="Proc. Natl. Acad. Sci. U.S.A.">
        <title>Hydrophobic surfactant-associated polypeptides: SP-C is a lipopeptide with two palmitoylated cysteine residues, whereas SP-B lacks covalently linked fatty acyl groups.</title>
        <authorList>
            <person name="Curstedt T."/>
            <person name="Johansson J."/>
            <person name="Persson P."/>
            <person name="Eklund A."/>
            <person name="Robertson B."/>
            <person name="Loewenadler B."/>
            <person name="Joernvall H."/>
        </authorList>
    </citation>
    <scope>PALMITOYLATION AT CYS-5 AND CYS-6</scope>
</reference>
<reference key="3">
    <citation type="journal article" date="1994" name="Biochemistry">
        <title>The NMR structure of the pulmonary surfactant-associated polypeptide SP-C in an apolar solvent contains a valyl-rich alpha-helix.</title>
        <authorList>
            <person name="Johansson J."/>
            <person name="Szyperski T."/>
            <person name="Curstedt T."/>
            <person name="Wuethrich K."/>
        </authorList>
    </citation>
    <scope>STRUCTURE BY NMR</scope>
</reference>